<sequence>MSLEDLKSKDVDALRAELLELRQTQMKLRLQKASGQLQQTHQIRNVRRDIARIKTLLTQKKVRV</sequence>
<dbReference type="EMBL" id="CP000513">
    <property type="protein sequence ID" value="ABQ13314.1"/>
    <property type="molecule type" value="Genomic_DNA"/>
</dbReference>
<dbReference type="RefSeq" id="WP_012031562.1">
    <property type="nucleotide sequence ID" value="NC_009446.1"/>
</dbReference>
<dbReference type="SMR" id="A5EX91"/>
<dbReference type="STRING" id="246195.DNO_1267"/>
<dbReference type="KEGG" id="dno:DNO_1267"/>
<dbReference type="eggNOG" id="COG0255">
    <property type="taxonomic scope" value="Bacteria"/>
</dbReference>
<dbReference type="HOGENOM" id="CLU_158491_1_2_6"/>
<dbReference type="OrthoDB" id="9815192at2"/>
<dbReference type="Proteomes" id="UP000000248">
    <property type="component" value="Chromosome"/>
</dbReference>
<dbReference type="GO" id="GO:0022625">
    <property type="term" value="C:cytosolic large ribosomal subunit"/>
    <property type="evidence" value="ECO:0007669"/>
    <property type="project" value="TreeGrafter"/>
</dbReference>
<dbReference type="GO" id="GO:0003735">
    <property type="term" value="F:structural constituent of ribosome"/>
    <property type="evidence" value="ECO:0007669"/>
    <property type="project" value="InterPro"/>
</dbReference>
<dbReference type="GO" id="GO:0006412">
    <property type="term" value="P:translation"/>
    <property type="evidence" value="ECO:0007669"/>
    <property type="project" value="UniProtKB-UniRule"/>
</dbReference>
<dbReference type="CDD" id="cd00427">
    <property type="entry name" value="Ribosomal_L29_HIP"/>
    <property type="match status" value="1"/>
</dbReference>
<dbReference type="FunFam" id="1.10.287.310:FF:000001">
    <property type="entry name" value="50S ribosomal protein L29"/>
    <property type="match status" value="1"/>
</dbReference>
<dbReference type="Gene3D" id="1.10.287.310">
    <property type="match status" value="1"/>
</dbReference>
<dbReference type="HAMAP" id="MF_00374">
    <property type="entry name" value="Ribosomal_uL29"/>
    <property type="match status" value="1"/>
</dbReference>
<dbReference type="InterPro" id="IPR050063">
    <property type="entry name" value="Ribosomal_protein_uL29"/>
</dbReference>
<dbReference type="InterPro" id="IPR001854">
    <property type="entry name" value="Ribosomal_uL29"/>
</dbReference>
<dbReference type="InterPro" id="IPR018254">
    <property type="entry name" value="Ribosomal_uL29_CS"/>
</dbReference>
<dbReference type="InterPro" id="IPR036049">
    <property type="entry name" value="Ribosomal_uL29_sf"/>
</dbReference>
<dbReference type="NCBIfam" id="TIGR00012">
    <property type="entry name" value="L29"/>
    <property type="match status" value="1"/>
</dbReference>
<dbReference type="PANTHER" id="PTHR10916">
    <property type="entry name" value="60S RIBOSOMAL PROTEIN L35/50S RIBOSOMAL PROTEIN L29"/>
    <property type="match status" value="1"/>
</dbReference>
<dbReference type="PANTHER" id="PTHR10916:SF0">
    <property type="entry name" value="LARGE RIBOSOMAL SUBUNIT PROTEIN UL29C"/>
    <property type="match status" value="1"/>
</dbReference>
<dbReference type="Pfam" id="PF00831">
    <property type="entry name" value="Ribosomal_L29"/>
    <property type="match status" value="1"/>
</dbReference>
<dbReference type="SUPFAM" id="SSF46561">
    <property type="entry name" value="Ribosomal protein L29 (L29p)"/>
    <property type="match status" value="1"/>
</dbReference>
<dbReference type="PROSITE" id="PS00579">
    <property type="entry name" value="RIBOSOMAL_L29"/>
    <property type="match status" value="1"/>
</dbReference>
<proteinExistence type="inferred from homology"/>
<evidence type="ECO:0000255" key="1">
    <source>
        <dbReference type="HAMAP-Rule" id="MF_00374"/>
    </source>
</evidence>
<evidence type="ECO:0000305" key="2"/>
<protein>
    <recommendedName>
        <fullName evidence="1">Large ribosomal subunit protein uL29</fullName>
    </recommendedName>
    <alternativeName>
        <fullName evidence="2">50S ribosomal protein L29</fullName>
    </alternativeName>
</protein>
<reference key="1">
    <citation type="journal article" date="2007" name="Nat. Biotechnol.">
        <title>Genome sequence and identification of candidate vaccine antigens from the animal pathogen Dichelobacter nodosus.</title>
        <authorList>
            <person name="Myers G.S.A."/>
            <person name="Parker D."/>
            <person name="Al-Hasani K."/>
            <person name="Kennan R.M."/>
            <person name="Seemann T."/>
            <person name="Ren Q."/>
            <person name="Badger J.H."/>
            <person name="Selengut J.D."/>
            <person name="Deboy R.T."/>
            <person name="Tettelin H."/>
            <person name="Boyce J.D."/>
            <person name="McCarl V.P."/>
            <person name="Han X."/>
            <person name="Nelson W.C."/>
            <person name="Madupu R."/>
            <person name="Mohamoud Y."/>
            <person name="Holley T."/>
            <person name="Fedorova N."/>
            <person name="Khouri H."/>
            <person name="Bottomley S.P."/>
            <person name="Whittington R.J."/>
            <person name="Adler B."/>
            <person name="Songer J.G."/>
            <person name="Rood J.I."/>
            <person name="Paulsen I.T."/>
        </authorList>
    </citation>
    <scope>NUCLEOTIDE SEQUENCE [LARGE SCALE GENOMIC DNA]</scope>
    <source>
        <strain>VCS1703A</strain>
    </source>
</reference>
<organism>
    <name type="scientific">Dichelobacter nodosus (strain VCS1703A)</name>
    <dbReference type="NCBI Taxonomy" id="246195"/>
    <lineage>
        <taxon>Bacteria</taxon>
        <taxon>Pseudomonadati</taxon>
        <taxon>Pseudomonadota</taxon>
        <taxon>Gammaproteobacteria</taxon>
        <taxon>Cardiobacteriales</taxon>
        <taxon>Cardiobacteriaceae</taxon>
        <taxon>Dichelobacter</taxon>
    </lineage>
</organism>
<name>RL29_DICNV</name>
<keyword id="KW-1185">Reference proteome</keyword>
<keyword id="KW-0687">Ribonucleoprotein</keyword>
<keyword id="KW-0689">Ribosomal protein</keyword>
<gene>
    <name evidence="1" type="primary">rpmC</name>
    <name type="ordered locus">DNO_1267</name>
</gene>
<feature type="chain" id="PRO_1000007475" description="Large ribosomal subunit protein uL29">
    <location>
        <begin position="1"/>
        <end position="64"/>
    </location>
</feature>
<comment type="similarity">
    <text evidence="1">Belongs to the universal ribosomal protein uL29 family.</text>
</comment>
<accession>A5EX91</accession>